<protein>
    <recommendedName>
        <fullName evidence="3">Mannitol-binding protein</fullName>
    </recommendedName>
</protein>
<reference key="1">
    <citation type="journal article" date="2000" name="Nature">
        <title>Complete genome sequence of Pseudomonas aeruginosa PAO1, an opportunistic pathogen.</title>
        <authorList>
            <person name="Stover C.K."/>
            <person name="Pham X.-Q.T."/>
            <person name="Erwin A.L."/>
            <person name="Mizoguchi S.D."/>
            <person name="Warrener P."/>
            <person name="Hickey M.J."/>
            <person name="Brinkman F.S.L."/>
            <person name="Hufnagle W.O."/>
            <person name="Kowalik D.J."/>
            <person name="Lagrou M."/>
            <person name="Garber R.L."/>
            <person name="Goltry L."/>
            <person name="Tolentino E."/>
            <person name="Westbrock-Wadman S."/>
            <person name="Yuan Y."/>
            <person name="Brody L.L."/>
            <person name="Coulter S.N."/>
            <person name="Folger K.R."/>
            <person name="Kas A."/>
            <person name="Larbig K."/>
            <person name="Lim R.M."/>
            <person name="Smith K.A."/>
            <person name="Spencer D.H."/>
            <person name="Wong G.K.-S."/>
            <person name="Wu Z."/>
            <person name="Paulsen I.T."/>
            <person name="Reizer J."/>
            <person name="Saier M.H. Jr."/>
            <person name="Hancock R.E.W."/>
            <person name="Lory S."/>
            <person name="Olson M.V."/>
        </authorList>
    </citation>
    <scope>NUCLEOTIDE SEQUENCE [LARGE SCALE GENOMIC DNA]</scope>
    <source>
        <strain>ATCC 15692 / DSM 22644 / CIP 104116 / JCM 14847 / LMG 12228 / 1C / PRS 101 / PAO1</strain>
    </source>
</reference>
<reference key="2">
    <citation type="journal article" date="2019" name="Int. J. Mol. Sci.">
        <title>Determination of Ligand Profiles for Pseudomonas aeruginosa Solute Binding Proteins.</title>
        <authorList>
            <person name="Fernandez M."/>
            <person name="Rico-Jimenez M."/>
            <person name="Ortega A."/>
            <person name="Daddaoua A."/>
            <person name="Garcia Garcia A.I."/>
            <person name="Martin-Mora D."/>
            <person name="Torres N.M."/>
            <person name="Tajuelo A."/>
            <person name="Matilla M.A."/>
            <person name="Krell T."/>
        </authorList>
    </citation>
    <scope>FUNCTION AS A BINDING PROTEIN</scope>
    <source>
        <strain>ATCC 15692 / DSM 22644 / CIP 104116 / JCM 14847 / LMG 12228 / 1C / PRS 101 / PAO1</strain>
    </source>
</reference>
<accession>Q9I1E0</accession>
<comment type="function">
    <text evidence="2">Binds mannitol with high affinity.</text>
</comment>
<comment type="subcellular location">
    <subcellularLocation>
        <location evidence="3">Periplasm</location>
    </subcellularLocation>
</comment>
<comment type="similarity">
    <text evidence="3">Belongs to the bacterial solute-binding protein 1 family.</text>
</comment>
<gene>
    <name evidence="4" type="ordered locus">PA2338</name>
</gene>
<feature type="signal peptide" evidence="1">
    <location>
        <begin position="1"/>
        <end position="22"/>
    </location>
</feature>
<feature type="chain" id="PRO_5004327403" description="Mannitol-binding protein" evidence="1">
    <location>
        <begin position="23"/>
        <end position="436"/>
    </location>
</feature>
<organism>
    <name type="scientific">Pseudomonas aeruginosa (strain ATCC 15692 / DSM 22644 / CIP 104116 / JCM 14847 / LMG 12228 / 1C / PRS 101 / PAO1)</name>
    <dbReference type="NCBI Taxonomy" id="208964"/>
    <lineage>
        <taxon>Bacteria</taxon>
        <taxon>Pseudomonadati</taxon>
        <taxon>Pseudomonadota</taxon>
        <taxon>Gammaproteobacteria</taxon>
        <taxon>Pseudomonadales</taxon>
        <taxon>Pseudomonadaceae</taxon>
        <taxon>Pseudomonas</taxon>
    </lineage>
</organism>
<sequence>MNDSIKACLAAACLALPLLAQGAETLTIATVNNNDMIRMQRLSKVFEESHPDIALKWVVLEENVLRQRLTTDIATQGGQFDLLTIGMYEAALWGAKGWLEPMSGLPADYALDDLLPSVRDGLSVKGTLYALPFYAEASITYYRKDLFQQAGLRMPEQPTWTQLGEFAARLNRPDQGQYGICLRGKAGWGENMALIGTLANAFGARWFDERWQPEFSGGEWKKALDFYVSTLKRYGPPGASSNGFNENLALFNSGKCAIWVDASVAGSFVTDKSQSKVADATGFAFAPREVTDKGASWLYSWALAIPASSRAKDAAKAFATWATSQAYGKLVADREGVANVPPGTRASTYSEAYLAAAPFARVTLESLKRVDPNHPTLKPVPYVGIQLVTIPEFQAIGTQVGKLFSAALTGQMSSDQALAAAQQSTAREMKRAGYPK</sequence>
<name>MANBP_PSEAE</name>
<dbReference type="EMBL" id="AE004091">
    <property type="protein sequence ID" value="AAG05726.1"/>
    <property type="molecule type" value="Genomic_DNA"/>
</dbReference>
<dbReference type="PIR" id="H83352">
    <property type="entry name" value="H83352"/>
</dbReference>
<dbReference type="RefSeq" id="NP_251028.1">
    <property type="nucleotide sequence ID" value="NC_002516.2"/>
</dbReference>
<dbReference type="RefSeq" id="WP_003105362.1">
    <property type="nucleotide sequence ID" value="NZ_QZGE01000021.1"/>
</dbReference>
<dbReference type="SMR" id="Q9I1E0"/>
<dbReference type="STRING" id="208964.PA2338"/>
<dbReference type="PaxDb" id="208964-PA2338"/>
<dbReference type="GeneID" id="883086"/>
<dbReference type="KEGG" id="pae:PA2338"/>
<dbReference type="PATRIC" id="fig|208964.12.peg.2446"/>
<dbReference type="PseudoCAP" id="PA2338"/>
<dbReference type="HOGENOM" id="CLU_031285_9_0_6"/>
<dbReference type="InParanoid" id="Q9I1E0"/>
<dbReference type="OrthoDB" id="9804061at2"/>
<dbReference type="PhylomeDB" id="Q9I1E0"/>
<dbReference type="BioCyc" id="PAER208964:G1FZ6-2377-MONOMER"/>
<dbReference type="Proteomes" id="UP000002438">
    <property type="component" value="Chromosome"/>
</dbReference>
<dbReference type="GO" id="GO:0042597">
    <property type="term" value="C:periplasmic space"/>
    <property type="evidence" value="ECO:0007669"/>
    <property type="project" value="UniProtKB-SubCell"/>
</dbReference>
<dbReference type="CDD" id="cd13585">
    <property type="entry name" value="PBP2_TMBP_like"/>
    <property type="match status" value="1"/>
</dbReference>
<dbReference type="Gene3D" id="3.40.190.10">
    <property type="entry name" value="Periplasmic binding protein-like II"/>
    <property type="match status" value="2"/>
</dbReference>
<dbReference type="InterPro" id="IPR050490">
    <property type="entry name" value="Bact_solute-bd_prot1"/>
</dbReference>
<dbReference type="InterPro" id="IPR006059">
    <property type="entry name" value="SBP"/>
</dbReference>
<dbReference type="PANTHER" id="PTHR43649">
    <property type="entry name" value="ARABINOSE-BINDING PROTEIN-RELATED"/>
    <property type="match status" value="1"/>
</dbReference>
<dbReference type="PANTHER" id="PTHR43649:SF12">
    <property type="entry name" value="DIACETYLCHITOBIOSE BINDING PROTEIN DASA"/>
    <property type="match status" value="1"/>
</dbReference>
<dbReference type="Pfam" id="PF01547">
    <property type="entry name" value="SBP_bac_1"/>
    <property type="match status" value="1"/>
</dbReference>
<dbReference type="SUPFAM" id="SSF53850">
    <property type="entry name" value="Periplasmic binding protein-like II"/>
    <property type="match status" value="1"/>
</dbReference>
<evidence type="ECO:0000255" key="1"/>
<evidence type="ECO:0000269" key="2">
    <source>
    </source>
</evidence>
<evidence type="ECO:0000305" key="3"/>
<evidence type="ECO:0000312" key="4">
    <source>
        <dbReference type="EMBL" id="AAG05726.1"/>
    </source>
</evidence>
<proteinExistence type="evidence at protein level"/>
<keyword id="KW-0574">Periplasm</keyword>
<keyword id="KW-1185">Reference proteome</keyword>
<keyword id="KW-0732">Signal</keyword>
<keyword id="KW-0813">Transport</keyword>